<comment type="subcellular location">
    <subcellularLocation>
        <location evidence="3">Membrane</location>
        <topology evidence="3">Multi-pass membrane protein</topology>
    </subcellularLocation>
</comment>
<comment type="similarity">
    <text evidence="3">Belongs to the ABC transporter superfamily. ABCA family. CPR flippase (TC 3.A.1.211) subfamily.</text>
</comment>
<comment type="sequence caution" evidence="3">
    <conflict type="erroneous gene model prediction">
        <sequence resource="EMBL-CDS" id="CAB41859"/>
    </conflict>
</comment>
<accession>Q9STT7</accession>
<accession>F4JCP4</accession>
<keyword id="KW-0067">ATP-binding</keyword>
<keyword id="KW-0472">Membrane</keyword>
<keyword id="KW-0547">Nucleotide-binding</keyword>
<keyword id="KW-1185">Reference proteome</keyword>
<keyword id="KW-0812">Transmembrane</keyword>
<keyword id="KW-1133">Transmembrane helix</keyword>
<keyword id="KW-0813">Transport</keyword>
<sequence>MGNHVPAGFFTQANSLFRKNLTYQKRNIWSNVRLIVIPFYLCVLLVGIQVLFDTQVNNSADNRCGCRCIDKNGDGKCGQKSCGLQYSSQNQAFFCAFPNPPPLLPLLHIPRPETRSSDRDRDSCRQTGSCPVTILLTGNNHSLGTTISRNLLSTSFAMNSSDLFLRNLAYNVLGTTSKADYTNYLDPGILSDLPIFNVQPRCTPDTTTFSFPFRQSPLEFHKEVRCVEGLNLWRNNSIEISNEIFKGYRQGNLEEIINEVAAAYDLMDTDINNFNVTIWYNSTYKGDLRDRRVKYVRVPRSVNLVSNAYLEFLQGSGTKMLFDFVKEMPKQETRLRLEMASLIGPIFFTWVILLLFPVMLTSLVYEKQQHLRIIMKMHGLGDGPYWMITYAYFLAISIVYIICLMIFGSAIGLKFFRFNDYSIQFIFYFLCINLQISIAFLVSSAFSKIETASVAAYLYVFGSGLLGAFLFQFLLEGLSFPRSWIYIMELYPGFSLYRGLYEFSQYAFKRNLNGSGGMKWKDFNDSAMEEIFYIIIVEWFVALIAAYYTDKISSSGIDPFFFLKNQNPFKKSPSPYGLQRQVSAIAIEMEKLDVAHERVKVEQLMLETSTGHAIVCDNLKKVYPCRDGNPQKMAVRGLSLAVPSGECFGMLGPNGAGKTSFINMMTGLMKPTSGAAFVHGLDICKDMDIVYTSIGVCPQHDLLWETLTGREHLLFYGRLKNLKGSDLDQAVEESLKSVNLFRGGVADKPAGKYSGGMKRRLSVAISLIGSPKVVYMDEPSTGLDPASRRSLWTAIKRAKNHTAIILTTHSMEEAEFLCDRLGIFVDGRLQCVGNPKELKARYGGSYVLTMTTPSEHEKDVEMLVQDVSPNAKKIYHIAGTQKFEIPKEEVRISEVFQAVEKAKDNFRVFAWGLADTTLEDVFIKVARTAQASNVFS</sequence>
<reference key="1">
    <citation type="journal article" date="2000" name="Nature">
        <title>Sequence and analysis of chromosome 3 of the plant Arabidopsis thaliana.</title>
        <authorList>
            <person name="Salanoubat M."/>
            <person name="Lemcke K."/>
            <person name="Rieger M."/>
            <person name="Ansorge W."/>
            <person name="Unseld M."/>
            <person name="Fartmann B."/>
            <person name="Valle G."/>
            <person name="Bloecker H."/>
            <person name="Perez-Alonso M."/>
            <person name="Obermaier B."/>
            <person name="Delseny M."/>
            <person name="Boutry M."/>
            <person name="Grivell L.A."/>
            <person name="Mache R."/>
            <person name="Puigdomenech P."/>
            <person name="De Simone V."/>
            <person name="Choisne N."/>
            <person name="Artiguenave F."/>
            <person name="Robert C."/>
            <person name="Brottier P."/>
            <person name="Wincker P."/>
            <person name="Cattolico L."/>
            <person name="Weissenbach J."/>
            <person name="Saurin W."/>
            <person name="Quetier F."/>
            <person name="Schaefer M."/>
            <person name="Mueller-Auer S."/>
            <person name="Gabel C."/>
            <person name="Fuchs M."/>
            <person name="Benes V."/>
            <person name="Wurmbach E."/>
            <person name="Drzonek H."/>
            <person name="Erfle H."/>
            <person name="Jordan N."/>
            <person name="Bangert S."/>
            <person name="Wiedelmann R."/>
            <person name="Kranz H."/>
            <person name="Voss H."/>
            <person name="Holland R."/>
            <person name="Brandt P."/>
            <person name="Nyakatura G."/>
            <person name="Vezzi A."/>
            <person name="D'Angelo M."/>
            <person name="Pallavicini A."/>
            <person name="Toppo S."/>
            <person name="Simionati B."/>
            <person name="Conrad A."/>
            <person name="Hornischer K."/>
            <person name="Kauer G."/>
            <person name="Loehnert T.-H."/>
            <person name="Nordsiek G."/>
            <person name="Reichelt J."/>
            <person name="Scharfe M."/>
            <person name="Schoen O."/>
            <person name="Bargues M."/>
            <person name="Terol J."/>
            <person name="Climent J."/>
            <person name="Navarro P."/>
            <person name="Collado C."/>
            <person name="Perez-Perez A."/>
            <person name="Ottenwaelder B."/>
            <person name="Duchemin D."/>
            <person name="Cooke R."/>
            <person name="Laudie M."/>
            <person name="Berger-Llauro C."/>
            <person name="Purnelle B."/>
            <person name="Masuy D."/>
            <person name="de Haan M."/>
            <person name="Maarse A.C."/>
            <person name="Alcaraz J.-P."/>
            <person name="Cottet A."/>
            <person name="Casacuberta E."/>
            <person name="Monfort A."/>
            <person name="Argiriou A."/>
            <person name="Flores M."/>
            <person name="Liguori R."/>
            <person name="Vitale D."/>
            <person name="Mannhaupt G."/>
            <person name="Haase D."/>
            <person name="Schoof H."/>
            <person name="Rudd S."/>
            <person name="Zaccaria P."/>
            <person name="Mewes H.-W."/>
            <person name="Mayer K.F.X."/>
            <person name="Kaul S."/>
            <person name="Town C.D."/>
            <person name="Koo H.L."/>
            <person name="Tallon L.J."/>
            <person name="Jenkins J."/>
            <person name="Rooney T."/>
            <person name="Rizzo M."/>
            <person name="Walts A."/>
            <person name="Utterback T."/>
            <person name="Fujii C.Y."/>
            <person name="Shea T.P."/>
            <person name="Creasy T.H."/>
            <person name="Haas B."/>
            <person name="Maiti R."/>
            <person name="Wu D."/>
            <person name="Peterson J."/>
            <person name="Van Aken S."/>
            <person name="Pai G."/>
            <person name="Militscher J."/>
            <person name="Sellers P."/>
            <person name="Gill J.E."/>
            <person name="Feldblyum T.V."/>
            <person name="Preuss D."/>
            <person name="Lin X."/>
            <person name="Nierman W.C."/>
            <person name="Salzberg S.L."/>
            <person name="White O."/>
            <person name="Venter J.C."/>
            <person name="Fraser C.M."/>
            <person name="Kaneko T."/>
            <person name="Nakamura Y."/>
            <person name="Sato S."/>
            <person name="Kato T."/>
            <person name="Asamizu E."/>
            <person name="Sasamoto S."/>
            <person name="Kimura T."/>
            <person name="Idesawa K."/>
            <person name="Kawashima K."/>
            <person name="Kishida Y."/>
            <person name="Kiyokawa C."/>
            <person name="Kohara M."/>
            <person name="Matsumoto M."/>
            <person name="Matsuno A."/>
            <person name="Muraki A."/>
            <person name="Nakayama S."/>
            <person name="Nakazaki N."/>
            <person name="Shinpo S."/>
            <person name="Takeuchi C."/>
            <person name="Wada T."/>
            <person name="Watanabe A."/>
            <person name="Yamada M."/>
            <person name="Yasuda M."/>
            <person name="Tabata S."/>
        </authorList>
    </citation>
    <scope>NUCLEOTIDE SEQUENCE [LARGE SCALE GENOMIC DNA]</scope>
    <source>
        <strain>cv. Columbia</strain>
    </source>
</reference>
<reference key="2">
    <citation type="journal article" date="2017" name="Plant J.">
        <title>Araport11: a complete reannotation of the Arabidopsis thaliana reference genome.</title>
        <authorList>
            <person name="Cheng C.Y."/>
            <person name="Krishnakumar V."/>
            <person name="Chan A.P."/>
            <person name="Thibaud-Nissen F."/>
            <person name="Schobel S."/>
            <person name="Town C.D."/>
        </authorList>
    </citation>
    <scope>GENOME REANNOTATION</scope>
    <source>
        <strain>cv. Columbia</strain>
    </source>
</reference>
<reference key="3">
    <citation type="journal article" date="2001" name="J. Biol. Chem.">
        <title>The Arabidopsis thaliana ABC protein superfamily, a complete inventory.</title>
        <authorList>
            <person name="Sanchez-Fernandez R."/>
            <person name="Davies T.G."/>
            <person name="Coleman J.O."/>
            <person name="Rea P.A."/>
        </authorList>
    </citation>
    <scope>GENE FAMILY</scope>
    <scope>NOMENCLATURE</scope>
</reference>
<reference key="4">
    <citation type="journal article" date="2008" name="Trends Plant Sci.">
        <title>Plant ABC proteins - a unified nomenclature and updated inventory.</title>
        <authorList>
            <person name="Verrier P.J."/>
            <person name="Bird D."/>
            <person name="Burla B."/>
            <person name="Dassa E."/>
            <person name="Forestier C."/>
            <person name="Geisler M."/>
            <person name="Klein M."/>
            <person name="Kolukisaoglu H.U."/>
            <person name="Lee Y."/>
            <person name="Martinoia E."/>
            <person name="Murphy A."/>
            <person name="Rea P.A."/>
            <person name="Samuels L."/>
            <person name="Schulz B."/>
            <person name="Spalding E.J."/>
            <person name="Yazaki K."/>
            <person name="Theodoulou F.L."/>
        </authorList>
    </citation>
    <scope>GENE FAMILY</scope>
    <scope>NOMENCLATURE</scope>
</reference>
<proteinExistence type="inferred from homology"/>
<name>AB5A_ARATH</name>
<protein>
    <recommendedName>
        <fullName>ABC transporter A family member 5</fullName>
        <shortName>ABC transporter ABCA.5</shortName>
        <shortName>AtABCA5</shortName>
    </recommendedName>
    <alternativeName>
        <fullName>Putative ABC2 homolog 4</fullName>
    </alternativeName>
</protein>
<feature type="chain" id="PRO_0000240326" description="ABC transporter A family member 5">
    <location>
        <begin position="1"/>
        <end position="936"/>
    </location>
</feature>
<feature type="transmembrane region" description="Helical" evidence="1">
    <location>
        <begin position="34"/>
        <end position="54"/>
    </location>
</feature>
<feature type="transmembrane region" description="Helical" evidence="1">
    <location>
        <begin position="340"/>
        <end position="360"/>
    </location>
</feature>
<feature type="transmembrane region" description="Helical" evidence="1">
    <location>
        <begin position="393"/>
        <end position="413"/>
    </location>
</feature>
<feature type="transmembrane region" description="Helical" evidence="1">
    <location>
        <begin position="422"/>
        <end position="442"/>
    </location>
</feature>
<feature type="transmembrane region" description="Helical" evidence="1">
    <location>
        <begin position="454"/>
        <end position="474"/>
    </location>
</feature>
<feature type="transmembrane region" description="Helical" evidence="1">
    <location>
        <begin position="484"/>
        <end position="501"/>
    </location>
</feature>
<feature type="transmembrane region" description="Helical" evidence="1">
    <location>
        <begin position="527"/>
        <end position="547"/>
    </location>
</feature>
<feature type="domain" description="ABC transporter" evidence="2">
    <location>
        <begin position="614"/>
        <end position="851"/>
    </location>
</feature>
<feature type="binding site" evidence="2">
    <location>
        <begin position="652"/>
        <end position="659"/>
    </location>
    <ligand>
        <name>ATP</name>
        <dbReference type="ChEBI" id="CHEBI:30616"/>
    </ligand>
</feature>
<evidence type="ECO:0000255" key="1"/>
<evidence type="ECO:0000255" key="2">
    <source>
        <dbReference type="PROSITE-ProRule" id="PRU00434"/>
    </source>
</evidence>
<evidence type="ECO:0000305" key="3"/>
<dbReference type="EMBL" id="AL049746">
    <property type="protein sequence ID" value="CAB41859.1"/>
    <property type="status" value="ALT_SEQ"/>
    <property type="molecule type" value="Genomic_DNA"/>
</dbReference>
<dbReference type="EMBL" id="CP002686">
    <property type="protein sequence ID" value="ANM63942.1"/>
    <property type="molecule type" value="Genomic_DNA"/>
</dbReference>
<dbReference type="PIR" id="T07715">
    <property type="entry name" value="T07715"/>
</dbReference>
<dbReference type="RefSeq" id="NP_001326002.1">
    <property type="nucleotide sequence ID" value="NM_001339334.1"/>
</dbReference>
<dbReference type="SMR" id="Q9STT7"/>
<dbReference type="FunCoup" id="Q9STT7">
    <property type="interactions" value="7"/>
</dbReference>
<dbReference type="STRING" id="3702.Q9STT7"/>
<dbReference type="PaxDb" id="3702-AT3G47760.1"/>
<dbReference type="EnsemblPlants" id="AT3G47760.3">
    <property type="protein sequence ID" value="AT3G47760.3"/>
    <property type="gene ID" value="AT3G47760"/>
</dbReference>
<dbReference type="GeneID" id="823930"/>
<dbReference type="Gramene" id="AT3G47760.3">
    <property type="protein sequence ID" value="AT3G47760.3"/>
    <property type="gene ID" value="AT3G47760"/>
</dbReference>
<dbReference type="KEGG" id="ath:AT3G47760"/>
<dbReference type="Araport" id="AT3G47760"/>
<dbReference type="TAIR" id="AT3G47760">
    <property type="gene designation" value="ABCA5"/>
</dbReference>
<dbReference type="eggNOG" id="KOG0059">
    <property type="taxonomic scope" value="Eukaryota"/>
</dbReference>
<dbReference type="InParanoid" id="Q9STT7"/>
<dbReference type="OMA" id="GTKGMEW"/>
<dbReference type="PhylomeDB" id="Q9STT7"/>
<dbReference type="PRO" id="PR:Q9STT7"/>
<dbReference type="Proteomes" id="UP000006548">
    <property type="component" value="Chromosome 3"/>
</dbReference>
<dbReference type="ExpressionAtlas" id="Q9STT7">
    <property type="expression patterns" value="baseline and differential"/>
</dbReference>
<dbReference type="GO" id="GO:0016020">
    <property type="term" value="C:membrane"/>
    <property type="evidence" value="ECO:0007669"/>
    <property type="project" value="UniProtKB-SubCell"/>
</dbReference>
<dbReference type="GO" id="GO:0140359">
    <property type="term" value="F:ABC-type transporter activity"/>
    <property type="evidence" value="ECO:0007669"/>
    <property type="project" value="InterPro"/>
</dbReference>
<dbReference type="GO" id="GO:0005524">
    <property type="term" value="F:ATP binding"/>
    <property type="evidence" value="ECO:0007669"/>
    <property type="project" value="UniProtKB-KW"/>
</dbReference>
<dbReference type="GO" id="GO:0016887">
    <property type="term" value="F:ATP hydrolysis activity"/>
    <property type="evidence" value="ECO:0007669"/>
    <property type="project" value="InterPro"/>
</dbReference>
<dbReference type="CDD" id="cd03263">
    <property type="entry name" value="ABC_subfamily_A"/>
    <property type="match status" value="1"/>
</dbReference>
<dbReference type="FunFam" id="3.40.50.300:FF:000633">
    <property type="entry name" value="ABC transporter A family member 7"/>
    <property type="match status" value="1"/>
</dbReference>
<dbReference type="Gene3D" id="3.40.50.300">
    <property type="entry name" value="P-loop containing nucleotide triphosphate hydrolases"/>
    <property type="match status" value="1"/>
</dbReference>
<dbReference type="InterPro" id="IPR003593">
    <property type="entry name" value="AAA+_ATPase"/>
</dbReference>
<dbReference type="InterPro" id="IPR013525">
    <property type="entry name" value="ABC2_TM"/>
</dbReference>
<dbReference type="InterPro" id="IPR003439">
    <property type="entry name" value="ABC_transporter-like_ATP-bd"/>
</dbReference>
<dbReference type="InterPro" id="IPR017871">
    <property type="entry name" value="ABC_transporter-like_CS"/>
</dbReference>
<dbReference type="InterPro" id="IPR026082">
    <property type="entry name" value="ABCA"/>
</dbReference>
<dbReference type="InterPro" id="IPR027417">
    <property type="entry name" value="P-loop_NTPase"/>
</dbReference>
<dbReference type="PANTHER" id="PTHR19229:SF154">
    <property type="entry name" value="ABC TRANSPORTER A FAMILY MEMBER 3-RELATED"/>
    <property type="match status" value="1"/>
</dbReference>
<dbReference type="PANTHER" id="PTHR19229">
    <property type="entry name" value="ATP-BINDING CASSETTE TRANSPORTER SUBFAMILY A ABCA"/>
    <property type="match status" value="1"/>
</dbReference>
<dbReference type="Pfam" id="PF12698">
    <property type="entry name" value="ABC2_membrane_3"/>
    <property type="match status" value="1"/>
</dbReference>
<dbReference type="Pfam" id="PF00005">
    <property type="entry name" value="ABC_tran"/>
    <property type="match status" value="1"/>
</dbReference>
<dbReference type="Pfam" id="PF24526">
    <property type="entry name" value="ABCA12_C"/>
    <property type="match status" value="1"/>
</dbReference>
<dbReference type="SMART" id="SM00382">
    <property type="entry name" value="AAA"/>
    <property type="match status" value="1"/>
</dbReference>
<dbReference type="SUPFAM" id="SSF52540">
    <property type="entry name" value="P-loop containing nucleoside triphosphate hydrolases"/>
    <property type="match status" value="1"/>
</dbReference>
<dbReference type="PROSITE" id="PS00211">
    <property type="entry name" value="ABC_TRANSPORTER_1"/>
    <property type="match status" value="1"/>
</dbReference>
<dbReference type="PROSITE" id="PS50893">
    <property type="entry name" value="ABC_TRANSPORTER_2"/>
    <property type="match status" value="1"/>
</dbReference>
<gene>
    <name type="primary">ABCA5</name>
    <name type="synonym">ATH4</name>
    <name type="ordered locus">At3g47760</name>
    <name type="ORF">T23J7.90</name>
</gene>
<organism>
    <name type="scientific">Arabidopsis thaliana</name>
    <name type="common">Mouse-ear cress</name>
    <dbReference type="NCBI Taxonomy" id="3702"/>
    <lineage>
        <taxon>Eukaryota</taxon>
        <taxon>Viridiplantae</taxon>
        <taxon>Streptophyta</taxon>
        <taxon>Embryophyta</taxon>
        <taxon>Tracheophyta</taxon>
        <taxon>Spermatophyta</taxon>
        <taxon>Magnoliopsida</taxon>
        <taxon>eudicotyledons</taxon>
        <taxon>Gunneridae</taxon>
        <taxon>Pentapetalae</taxon>
        <taxon>rosids</taxon>
        <taxon>malvids</taxon>
        <taxon>Brassicales</taxon>
        <taxon>Brassicaceae</taxon>
        <taxon>Camelineae</taxon>
        <taxon>Arabidopsis</taxon>
    </lineage>
</organism>